<sequence>MQSVQGTDAMTAPAASLPGSKKVFIKWALLGTVGLINGYATILMYSRGEVAFAMLTVILTALALYVFGSKKTYAHRYIYPGIAGMILFILFPLAYTVGLAFTNYSAKNQLSLDRAQSVLLDRTFQSGESYPFTLYKTDSGHRIVIKDGDVLLSTPEFVLGSAISDLDLSPVDTVSGTAEPIKTIVSNRTALSSIDLHFANGDDIRMSGLRKFAGVVPLYTMQADGETLKNNQTGELLKPNMDVGFYQAMDEAGNFVGNTVSPGFVVQIGTDNFERVWKDDGIKEPFISIFIWTVVFSILTVLLTLMIGLVLASVVQWEELKGRAIYRVLLILPYAVPAFISILIFKGLFNQSFGEINMVLNALFGISPSWFSDPIMAKSMVLIVNTWLGFPYMMILCMGLLKAIPEDLYEASAIDGANFVQNFTRVTLPLMIKPLTPLLIASFAFNFNNFVMIQLLTQGGPNMIGTSEPAGYTDLLVSYTYRIAFEGGGGQDFGLASAIATLIFLLVGALALLNLRFTKLSQN</sequence>
<evidence type="ECO:0000250" key="1">
    <source>
        <dbReference type="UniProtKB" id="P02916"/>
    </source>
</evidence>
<evidence type="ECO:0000255" key="2"/>
<evidence type="ECO:0000255" key="3">
    <source>
        <dbReference type="PROSITE-ProRule" id="PRU00441"/>
    </source>
</evidence>
<evidence type="ECO:0000305" key="4"/>
<reference key="1">
    <citation type="journal article" date="2003" name="Genome Res.">
        <title>Comparative genome analysis of Vibrio vulnificus, a marine pathogen.</title>
        <authorList>
            <person name="Chen C.-Y."/>
            <person name="Wu K.-M."/>
            <person name="Chang Y.-C."/>
            <person name="Chang C.-H."/>
            <person name="Tsai H.-C."/>
            <person name="Liao T.-L."/>
            <person name="Liu Y.-M."/>
            <person name="Chen H.-J."/>
            <person name="Shen A.B.-T."/>
            <person name="Li J.-C."/>
            <person name="Su T.-L."/>
            <person name="Shao C.-P."/>
            <person name="Lee C.-T."/>
            <person name="Hor L.-I."/>
            <person name="Tsai S.-F."/>
        </authorList>
    </citation>
    <scope>NUCLEOTIDE SEQUENCE [LARGE SCALE GENOMIC DNA]</scope>
    <source>
        <strain>YJ016</strain>
    </source>
</reference>
<name>MALF_VIBVY</name>
<proteinExistence type="inferred from homology"/>
<feature type="chain" id="PRO_0000060079" description="Maltose/maltodextrin transport system permease protein MalF">
    <location>
        <begin position="1"/>
        <end position="523"/>
    </location>
</feature>
<feature type="topological domain" description="Cytoplasmic" evidence="2">
    <location>
        <begin position="1"/>
        <end position="22"/>
    </location>
</feature>
<feature type="transmembrane region" description="Helical" evidence="3">
    <location>
        <begin position="23"/>
        <end position="45"/>
    </location>
</feature>
<feature type="topological domain" description="Periplasmic" evidence="2">
    <location>
        <begin position="46"/>
        <end position="49"/>
    </location>
</feature>
<feature type="transmembrane region" description="Helical" evidence="3">
    <location>
        <begin position="50"/>
        <end position="69"/>
    </location>
</feature>
<feature type="topological domain" description="Cytoplasmic" evidence="2">
    <location>
        <begin position="70"/>
        <end position="81"/>
    </location>
</feature>
<feature type="transmembrane region" description="Helical" evidence="3">
    <location>
        <begin position="82"/>
        <end position="104"/>
    </location>
</feature>
<feature type="topological domain" description="Periplasmic" evidence="2">
    <location>
        <begin position="105"/>
        <end position="288"/>
    </location>
</feature>
<feature type="transmembrane region" description="Helical" evidence="3">
    <location>
        <begin position="289"/>
        <end position="311"/>
    </location>
</feature>
<feature type="topological domain" description="Cytoplasmic" evidence="2">
    <location>
        <begin position="312"/>
        <end position="322"/>
    </location>
</feature>
<feature type="transmembrane region" description="Helical" evidence="3">
    <location>
        <begin position="323"/>
        <end position="345"/>
    </location>
</feature>
<feature type="topological domain" description="Periplasmic" evidence="2">
    <location>
        <begin position="346"/>
        <end position="378"/>
    </location>
</feature>
<feature type="transmembrane region" description="Helical" evidence="3">
    <location>
        <begin position="379"/>
        <end position="401"/>
    </location>
</feature>
<feature type="topological domain" description="Cytoplasmic" evidence="2">
    <location>
        <begin position="402"/>
        <end position="434"/>
    </location>
</feature>
<feature type="transmembrane region" description="Helical" evidence="3">
    <location>
        <begin position="435"/>
        <end position="457"/>
    </location>
</feature>
<feature type="topological domain" description="Periplasmic" evidence="2">
    <location>
        <begin position="458"/>
        <end position="492"/>
    </location>
</feature>
<feature type="transmembrane region" description="Helical" evidence="3">
    <location>
        <begin position="493"/>
        <end position="515"/>
    </location>
</feature>
<feature type="topological domain" description="Cytoplasmic" evidence="2">
    <location>
        <begin position="516"/>
        <end position="523"/>
    </location>
</feature>
<feature type="domain" description="ABC transmembrane type-1" evidence="3">
    <location>
        <begin position="290"/>
        <end position="514"/>
    </location>
</feature>
<gene>
    <name type="primary">malF</name>
    <name type="ordered locus">VVA0398</name>
</gene>
<accession>Q7MFC2</accession>
<comment type="function">
    <text evidence="1">Part of the ABC transporter complex MalEFGK involved in maltose/maltodextrin import. Probably responsible for the translocation of the substrate across the membrane.</text>
</comment>
<comment type="subunit">
    <text evidence="1">The complex is composed of two ATP-binding proteins (MalK), two transmembrane proteins (MalG and MalF) and a solute-binding protein (MalE).</text>
</comment>
<comment type="subcellular location">
    <subcellularLocation>
        <location evidence="1">Cell inner membrane</location>
        <topology evidence="1">Multi-pass membrane protein</topology>
    </subcellularLocation>
</comment>
<comment type="similarity">
    <text evidence="4">Belongs to the binding-protein-dependent transport system permease family. MalFG subfamily.</text>
</comment>
<keyword id="KW-0997">Cell inner membrane</keyword>
<keyword id="KW-1003">Cell membrane</keyword>
<keyword id="KW-0472">Membrane</keyword>
<keyword id="KW-0762">Sugar transport</keyword>
<keyword id="KW-0812">Transmembrane</keyword>
<keyword id="KW-1133">Transmembrane helix</keyword>
<keyword id="KW-0813">Transport</keyword>
<protein>
    <recommendedName>
        <fullName evidence="1">Maltose/maltodextrin transport system permease protein MalF</fullName>
    </recommendedName>
</protein>
<dbReference type="EMBL" id="BA000038">
    <property type="protein sequence ID" value="BAC96424.1"/>
    <property type="molecule type" value="Genomic_DNA"/>
</dbReference>
<dbReference type="RefSeq" id="WP_011082432.1">
    <property type="nucleotide sequence ID" value="NC_005140.1"/>
</dbReference>
<dbReference type="SMR" id="Q7MFC2"/>
<dbReference type="STRING" id="672.VV93_v1c33850"/>
<dbReference type="KEGG" id="vvy:VVA0398"/>
<dbReference type="eggNOG" id="COG1175">
    <property type="taxonomic scope" value="Bacteria"/>
</dbReference>
<dbReference type="HOGENOM" id="CLU_016047_20_0_6"/>
<dbReference type="Proteomes" id="UP000002675">
    <property type="component" value="Chromosome II"/>
</dbReference>
<dbReference type="GO" id="GO:1990060">
    <property type="term" value="C:maltose transport complex"/>
    <property type="evidence" value="ECO:0007669"/>
    <property type="project" value="TreeGrafter"/>
</dbReference>
<dbReference type="GO" id="GO:0015423">
    <property type="term" value="F:ABC-type maltose transporter activity"/>
    <property type="evidence" value="ECO:0007669"/>
    <property type="project" value="TreeGrafter"/>
</dbReference>
<dbReference type="GO" id="GO:0042956">
    <property type="term" value="P:maltodextrin transmembrane transport"/>
    <property type="evidence" value="ECO:0007669"/>
    <property type="project" value="TreeGrafter"/>
</dbReference>
<dbReference type="CDD" id="cd06261">
    <property type="entry name" value="TM_PBP2"/>
    <property type="match status" value="1"/>
</dbReference>
<dbReference type="FunFam" id="1.10.3720.10:FF:000030">
    <property type="entry name" value="Maltose ABC transporter permease MalF"/>
    <property type="match status" value="1"/>
</dbReference>
<dbReference type="Gene3D" id="2.40.430.10">
    <property type="entry name" value="D-maltodextrin-binding protein, MBP"/>
    <property type="match status" value="1"/>
</dbReference>
<dbReference type="Gene3D" id="1.20.58.370">
    <property type="entry name" value="MalF N-terminal region-like"/>
    <property type="match status" value="1"/>
</dbReference>
<dbReference type="Gene3D" id="3.10.650.10">
    <property type="entry name" value="MalF N-terminal region-like"/>
    <property type="match status" value="1"/>
</dbReference>
<dbReference type="Gene3D" id="1.10.3720.10">
    <property type="entry name" value="MetI-like"/>
    <property type="match status" value="1"/>
</dbReference>
<dbReference type="InterPro" id="IPR035277">
    <property type="entry name" value="MalF_N"/>
</dbReference>
<dbReference type="InterPro" id="IPR048464">
    <property type="entry name" value="MalF_N_TM"/>
</dbReference>
<dbReference type="InterPro" id="IPR029345">
    <property type="entry name" value="MalF_P2"/>
</dbReference>
<dbReference type="InterPro" id="IPR047103">
    <property type="entry name" value="MalF_P2_sf"/>
</dbReference>
<dbReference type="InterPro" id="IPR000515">
    <property type="entry name" value="MetI-like"/>
</dbReference>
<dbReference type="InterPro" id="IPR035906">
    <property type="entry name" value="MetI-like_sf"/>
</dbReference>
<dbReference type="NCBIfam" id="NF008232">
    <property type="entry name" value="PRK10999.1"/>
    <property type="match status" value="1"/>
</dbReference>
<dbReference type="PANTHER" id="PTHR47314">
    <property type="entry name" value="MALTOSE/MALTODEXTRIN TRANSPORT SYSTEM PERMEASE PROTEIN MALF"/>
    <property type="match status" value="1"/>
</dbReference>
<dbReference type="PANTHER" id="PTHR47314:SF1">
    <property type="entry name" value="MALTOSE_MALTODEXTRIN TRANSPORT SYSTEM PERMEASE PROTEIN MALF"/>
    <property type="match status" value="1"/>
</dbReference>
<dbReference type="Pfam" id="PF00528">
    <property type="entry name" value="BPD_transp_1"/>
    <property type="match status" value="1"/>
</dbReference>
<dbReference type="Pfam" id="PF20872">
    <property type="entry name" value="MalF_N_TM"/>
    <property type="match status" value="1"/>
</dbReference>
<dbReference type="Pfam" id="PF14785">
    <property type="entry name" value="MalF_P2"/>
    <property type="match status" value="1"/>
</dbReference>
<dbReference type="SUPFAM" id="SSF160964">
    <property type="entry name" value="MalF N-terminal region-like"/>
    <property type="match status" value="1"/>
</dbReference>
<dbReference type="SUPFAM" id="SSF161098">
    <property type="entry name" value="MetI-like"/>
    <property type="match status" value="1"/>
</dbReference>
<dbReference type="PROSITE" id="PS50928">
    <property type="entry name" value="ABC_TM1"/>
    <property type="match status" value="1"/>
</dbReference>
<organism>
    <name type="scientific">Vibrio vulnificus (strain YJ016)</name>
    <dbReference type="NCBI Taxonomy" id="196600"/>
    <lineage>
        <taxon>Bacteria</taxon>
        <taxon>Pseudomonadati</taxon>
        <taxon>Pseudomonadota</taxon>
        <taxon>Gammaproteobacteria</taxon>
        <taxon>Vibrionales</taxon>
        <taxon>Vibrionaceae</taxon>
        <taxon>Vibrio</taxon>
    </lineage>
</organism>